<accession>P34984</accession>
<accession>Q8VFS2</accession>
<comment type="function">
    <text evidence="3">Odorant receptor.</text>
</comment>
<comment type="subcellular location">
    <subcellularLocation>
        <location evidence="3">Cell membrane</location>
        <topology evidence="1">Multi-pass membrane protein</topology>
    </subcellularLocation>
</comment>
<comment type="tissue specificity">
    <text>Olfactory epithelium.</text>
</comment>
<comment type="similarity">
    <text evidence="2">Belongs to the G-protein coupled receptor 1 family.</text>
</comment>
<name>OR2A7_MOUSE</name>
<gene>
    <name evidence="4" type="primary">Or2a7</name>
    <name evidence="4" type="synonym">Mor261-6</name>
    <name evidence="4" type="synonym">Olfr13</name>
</gene>
<dbReference type="EMBL" id="AY073444">
    <property type="protein sequence ID" value="AAL61107.1"/>
    <property type="molecule type" value="Genomic_DNA"/>
</dbReference>
<dbReference type="EMBL" id="AY317543">
    <property type="protein sequence ID" value="AAP70951.1"/>
    <property type="molecule type" value="Genomic_DNA"/>
</dbReference>
<dbReference type="EMBL" id="L14566">
    <property type="protein sequence ID" value="AAA39850.1"/>
    <property type="molecule type" value="Genomic_DNA"/>
</dbReference>
<dbReference type="CCDS" id="CCDS20089.1"/>
<dbReference type="PIR" id="D40745">
    <property type="entry name" value="D40745"/>
</dbReference>
<dbReference type="RefSeq" id="NP_666863.1">
    <property type="nucleotide sequence ID" value="NM_146652.1"/>
</dbReference>
<dbReference type="SMR" id="P34984"/>
<dbReference type="FunCoup" id="P34984">
    <property type="interactions" value="1154"/>
</dbReference>
<dbReference type="STRING" id="10090.ENSMUSP00000149893"/>
<dbReference type="GlyCosmos" id="P34984">
    <property type="glycosylation" value="2 sites, No reported glycans"/>
</dbReference>
<dbReference type="GlyGen" id="P34984">
    <property type="glycosylation" value="2 sites"/>
</dbReference>
<dbReference type="iPTMnet" id="P34984"/>
<dbReference type="PhosphoSitePlus" id="P34984"/>
<dbReference type="PaxDb" id="10090-ENSMUSP00000053813"/>
<dbReference type="Ensembl" id="ENSMUST00000059512.5">
    <property type="protein sequence ID" value="ENSMUSP00000053813.5"/>
    <property type="gene ID" value="ENSMUSG00000043605.6"/>
</dbReference>
<dbReference type="Ensembl" id="ENSMUST00000216179.2">
    <property type="protein sequence ID" value="ENSMUSP00000149893.2"/>
    <property type="gene ID" value="ENSMUSG00000043605.6"/>
</dbReference>
<dbReference type="GeneID" id="18310"/>
<dbReference type="KEGG" id="mmu:18310"/>
<dbReference type="UCSC" id="uc009bsi.1">
    <property type="organism name" value="mouse"/>
</dbReference>
<dbReference type="AGR" id="MGI:104812"/>
<dbReference type="CTD" id="401427"/>
<dbReference type="MGI" id="MGI:104812">
    <property type="gene designation" value="Or2a7"/>
</dbReference>
<dbReference type="VEuPathDB" id="HostDB:ENSMUSG00000043605"/>
<dbReference type="eggNOG" id="ENOG502SM15">
    <property type="taxonomic scope" value="Eukaryota"/>
</dbReference>
<dbReference type="GeneTree" id="ENSGT00940000161677"/>
<dbReference type="HOGENOM" id="CLU_012526_1_2_1"/>
<dbReference type="InParanoid" id="P34984"/>
<dbReference type="OMA" id="VISYMCI"/>
<dbReference type="OrthoDB" id="6147321at2759"/>
<dbReference type="PhylomeDB" id="P34984"/>
<dbReference type="TreeFam" id="TF337251"/>
<dbReference type="BioGRID-ORCS" id="18310">
    <property type="hits" value="3 hits in 71 CRISPR screens"/>
</dbReference>
<dbReference type="PRO" id="PR:P34984"/>
<dbReference type="Proteomes" id="UP000000589">
    <property type="component" value="Chromosome 6"/>
</dbReference>
<dbReference type="RNAct" id="P34984">
    <property type="molecule type" value="protein"/>
</dbReference>
<dbReference type="Bgee" id="ENSMUSG00000043605">
    <property type="expression patterns" value="Expressed in testis and 1 other cell type or tissue"/>
</dbReference>
<dbReference type="ExpressionAtlas" id="P34984">
    <property type="expression patterns" value="baseline and differential"/>
</dbReference>
<dbReference type="GO" id="GO:0016020">
    <property type="term" value="C:membrane"/>
    <property type="evidence" value="ECO:0000266"/>
    <property type="project" value="MGI"/>
</dbReference>
<dbReference type="GO" id="GO:0005886">
    <property type="term" value="C:plasma membrane"/>
    <property type="evidence" value="ECO:0007669"/>
    <property type="project" value="UniProtKB-SubCell"/>
</dbReference>
<dbReference type="GO" id="GO:0004930">
    <property type="term" value="F:G protein-coupled receptor activity"/>
    <property type="evidence" value="ECO:0007669"/>
    <property type="project" value="UniProtKB-KW"/>
</dbReference>
<dbReference type="GO" id="GO:0004984">
    <property type="term" value="F:olfactory receptor activity"/>
    <property type="evidence" value="ECO:0000266"/>
    <property type="project" value="MGI"/>
</dbReference>
<dbReference type="GO" id="GO:0007186">
    <property type="term" value="P:G protein-coupled receptor signaling pathway"/>
    <property type="evidence" value="ECO:0000266"/>
    <property type="project" value="MGI"/>
</dbReference>
<dbReference type="GO" id="GO:0007608">
    <property type="term" value="P:sensory perception of smell"/>
    <property type="evidence" value="ECO:0000266"/>
    <property type="project" value="MGI"/>
</dbReference>
<dbReference type="CDD" id="cd15420">
    <property type="entry name" value="7tmA_OR2A-like"/>
    <property type="match status" value="1"/>
</dbReference>
<dbReference type="FunFam" id="1.10.1220.70:FF:000001">
    <property type="entry name" value="Olfactory receptor"/>
    <property type="match status" value="1"/>
</dbReference>
<dbReference type="FunFam" id="1.20.1070.10:FF:000008">
    <property type="entry name" value="Olfactory receptor"/>
    <property type="match status" value="1"/>
</dbReference>
<dbReference type="Gene3D" id="1.20.1070.10">
    <property type="entry name" value="Rhodopsin 7-helix transmembrane proteins"/>
    <property type="match status" value="1"/>
</dbReference>
<dbReference type="InterPro" id="IPR000276">
    <property type="entry name" value="GPCR_Rhodpsn"/>
</dbReference>
<dbReference type="InterPro" id="IPR017452">
    <property type="entry name" value="GPCR_Rhodpsn_7TM"/>
</dbReference>
<dbReference type="InterPro" id="IPR000725">
    <property type="entry name" value="Olfact_rcpt"/>
</dbReference>
<dbReference type="PANTHER" id="PTHR26453">
    <property type="entry name" value="OLFACTORY RECEPTOR"/>
    <property type="match status" value="1"/>
</dbReference>
<dbReference type="Pfam" id="PF13853">
    <property type="entry name" value="7tm_4"/>
    <property type="match status" value="1"/>
</dbReference>
<dbReference type="PRINTS" id="PR00237">
    <property type="entry name" value="GPCRRHODOPSN"/>
</dbReference>
<dbReference type="PRINTS" id="PR00245">
    <property type="entry name" value="OLFACTORYR"/>
</dbReference>
<dbReference type="SUPFAM" id="SSF81321">
    <property type="entry name" value="Family A G protein-coupled receptor-like"/>
    <property type="match status" value="1"/>
</dbReference>
<dbReference type="PROSITE" id="PS00237">
    <property type="entry name" value="G_PROTEIN_RECEP_F1_1"/>
    <property type="match status" value="1"/>
</dbReference>
<dbReference type="PROSITE" id="PS50262">
    <property type="entry name" value="G_PROTEIN_RECEP_F1_2"/>
    <property type="match status" value="1"/>
</dbReference>
<evidence type="ECO:0000255" key="1"/>
<evidence type="ECO:0000255" key="2">
    <source>
        <dbReference type="PROSITE-ProRule" id="PRU00521"/>
    </source>
</evidence>
<evidence type="ECO:0000305" key="3"/>
<evidence type="ECO:0000312" key="4">
    <source>
        <dbReference type="MGI" id="MGI:104812"/>
    </source>
</evidence>
<organism>
    <name type="scientific">Mus musculus</name>
    <name type="common">Mouse</name>
    <dbReference type="NCBI Taxonomy" id="10090"/>
    <lineage>
        <taxon>Eukaryota</taxon>
        <taxon>Metazoa</taxon>
        <taxon>Chordata</taxon>
        <taxon>Craniata</taxon>
        <taxon>Vertebrata</taxon>
        <taxon>Euteleostomi</taxon>
        <taxon>Mammalia</taxon>
        <taxon>Eutheria</taxon>
        <taxon>Euarchontoglires</taxon>
        <taxon>Glires</taxon>
        <taxon>Rodentia</taxon>
        <taxon>Myomorpha</taxon>
        <taxon>Muroidea</taxon>
        <taxon>Muridae</taxon>
        <taxon>Murinae</taxon>
        <taxon>Mus</taxon>
        <taxon>Mus</taxon>
    </lineage>
</organism>
<feature type="chain" id="PRO_0000150812" description="Olfactory receptor 2A7">
    <location>
        <begin position="1"/>
        <end position="310"/>
    </location>
</feature>
<feature type="topological domain" description="Extracellular" evidence="1">
    <location>
        <begin position="1"/>
        <end position="24"/>
    </location>
</feature>
<feature type="transmembrane region" description="Helical; Name=1" evidence="1">
    <location>
        <begin position="25"/>
        <end position="45"/>
    </location>
</feature>
<feature type="topological domain" description="Cytoplasmic" evidence="1">
    <location>
        <begin position="46"/>
        <end position="53"/>
    </location>
</feature>
<feature type="transmembrane region" description="Helical; Name=2" evidence="1">
    <location>
        <begin position="54"/>
        <end position="74"/>
    </location>
</feature>
<feature type="topological domain" description="Extracellular" evidence="1">
    <location>
        <begin position="75"/>
        <end position="96"/>
    </location>
</feature>
<feature type="transmembrane region" description="Helical; Name=3" evidence="1">
    <location>
        <begin position="97"/>
        <end position="117"/>
    </location>
</feature>
<feature type="topological domain" description="Cytoplasmic" evidence="1">
    <location>
        <begin position="118"/>
        <end position="148"/>
    </location>
</feature>
<feature type="transmembrane region" description="Helical; Name=4" evidence="1">
    <location>
        <begin position="149"/>
        <end position="169"/>
    </location>
</feature>
<feature type="topological domain" description="Extracellular" evidence="1">
    <location>
        <begin position="170"/>
        <end position="204"/>
    </location>
</feature>
<feature type="transmembrane region" description="Helical; Name=5" evidence="1">
    <location>
        <begin position="205"/>
        <end position="225"/>
    </location>
</feature>
<feature type="topological domain" description="Cytoplasmic" evidence="1">
    <location>
        <begin position="226"/>
        <end position="239"/>
    </location>
</feature>
<feature type="transmembrane region" description="Helical; Name=6" evidence="1">
    <location>
        <begin position="240"/>
        <end position="260"/>
    </location>
</feature>
<feature type="topological domain" description="Extracellular" evidence="1">
    <location>
        <begin position="261"/>
        <end position="273"/>
    </location>
</feature>
<feature type="transmembrane region" description="Helical; Name=7" evidence="1">
    <location>
        <begin position="274"/>
        <end position="291"/>
    </location>
</feature>
<feature type="topological domain" description="Cytoplasmic" evidence="1">
    <location>
        <begin position="292"/>
        <end position="310"/>
    </location>
</feature>
<feature type="glycosylation site" description="N-linked (GlcNAc...) asparagine" evidence="1">
    <location>
        <position position="4"/>
    </location>
</feature>
<feature type="glycosylation site" description="N-linked (GlcNAc...) asparagine" evidence="1">
    <location>
        <position position="194"/>
    </location>
</feature>
<feature type="disulfide bond" evidence="2">
    <location>
        <begin position="96"/>
        <end position="178"/>
    </location>
</feature>
<reference key="1">
    <citation type="journal article" date="2002" name="Nat. Neurosci.">
        <title>The olfactory receptor gene superfamily of the mouse.</title>
        <authorList>
            <person name="Zhang X."/>
            <person name="Firestein S."/>
        </authorList>
    </citation>
    <scope>NUCLEOTIDE SEQUENCE [GENOMIC DNA]</scope>
</reference>
<reference key="2">
    <citation type="journal article" date="2002" name="Hum. Mol. Genet.">
        <title>Different evolutionary processes shaped the mouse and human olfactory receptor gene families.</title>
        <authorList>
            <person name="Young J.M."/>
            <person name="Friedman C."/>
            <person name="Williams E.M."/>
            <person name="Ross J.A."/>
            <person name="Tonnes-Priddy L."/>
            <person name="Trask B.J."/>
        </authorList>
    </citation>
    <scope>NUCLEOTIDE SEQUENCE [GENOMIC DNA]</scope>
</reference>
<reference key="3">
    <citation type="journal article" date="2002" name="Hum. Mol. Genet.">
        <authorList>
            <person name="Young J.M."/>
            <person name="Friedman C."/>
            <person name="Williams E.M."/>
            <person name="Ross J.A."/>
            <person name="Tonnes-Priddy L."/>
            <person name="Trask B.J."/>
        </authorList>
    </citation>
    <scope>ERRATUM OF PUBMED:11875048</scope>
</reference>
<reference key="4">
    <citation type="journal article" date="1993" name="Cell">
        <title>A zonal organization of odorant receptor gene expression in the olfactory epithelium.</title>
        <authorList>
            <person name="Ressler K.J."/>
            <person name="Sullivan S.L."/>
            <person name="Buck L.B."/>
        </authorList>
    </citation>
    <scope>NUCLEOTIDE SEQUENCE [GENOMIC DNA] OF 60-281</scope>
    <source>
        <strain>C57BL/6J</strain>
        <tissue>Liver</tissue>
    </source>
</reference>
<sequence>MGNNMTLITEFILLGFPLSPRMQMLLFALFSLFYAFTLLGNGTIVGLICLDSRLHTPMYFFLSHLAIVDIAYACNTVPQMLVNLLDPVKPISYAGCMTQTFLFLTFAITECLLLVVMSYDRYVAICHPLRYSAIMSWRVCSTMAVTSWIIGVLLSLIHLVLLLPLPFCVSQKVNHFFCEITAILKLACADTHLNETMVLAGAVSVLVGPFSSIVVSYACILGAILKIQSEEGQRKAFSTCSSHLCVVGLFYGTAIVMYVGPRHGSPKEQKKYLLLFHSLFNPMLNPLIYSLRNSDVKNTLKRVLRTQRAL</sequence>
<keyword id="KW-1003">Cell membrane</keyword>
<keyword id="KW-1015">Disulfide bond</keyword>
<keyword id="KW-0297">G-protein coupled receptor</keyword>
<keyword id="KW-0325">Glycoprotein</keyword>
<keyword id="KW-0472">Membrane</keyword>
<keyword id="KW-0552">Olfaction</keyword>
<keyword id="KW-0675">Receptor</keyword>
<keyword id="KW-1185">Reference proteome</keyword>
<keyword id="KW-0716">Sensory transduction</keyword>
<keyword id="KW-0807">Transducer</keyword>
<keyword id="KW-0812">Transmembrane</keyword>
<keyword id="KW-1133">Transmembrane helix</keyword>
<proteinExistence type="evidence at transcript level"/>
<protein>
    <recommendedName>
        <fullName evidence="3">Olfactory receptor 2A7</fullName>
    </recommendedName>
    <alternativeName>
        <fullName>Odorant receptor K7</fullName>
    </alternativeName>
    <alternativeName>
        <fullName>Olfactory receptor 13</fullName>
    </alternativeName>
    <alternativeName>
        <fullName>Olfactory receptor 261-6</fullName>
    </alternativeName>
</protein>